<organism>
    <name type="scientific">Sinorhizobium fredii (strain NBRC 101917 / NGR234)</name>
    <dbReference type="NCBI Taxonomy" id="394"/>
    <lineage>
        <taxon>Bacteria</taxon>
        <taxon>Pseudomonadati</taxon>
        <taxon>Pseudomonadota</taxon>
        <taxon>Alphaproteobacteria</taxon>
        <taxon>Hyphomicrobiales</taxon>
        <taxon>Rhizobiaceae</taxon>
        <taxon>Sinorhizobium/Ensifer group</taxon>
        <taxon>Sinorhizobium</taxon>
    </lineage>
</organism>
<evidence type="ECO:0000255" key="1">
    <source>
        <dbReference type="HAMAP-Rule" id="MF_00189"/>
    </source>
</evidence>
<feature type="chain" id="PRO_1000124258" description="Inner membrane-spanning protein YciB">
    <location>
        <begin position="1"/>
        <end position="210"/>
    </location>
</feature>
<feature type="transmembrane region" description="Helical" evidence="1">
    <location>
        <begin position="19"/>
        <end position="39"/>
    </location>
</feature>
<feature type="transmembrane region" description="Helical" evidence="1">
    <location>
        <begin position="53"/>
        <end position="73"/>
    </location>
</feature>
<feature type="transmembrane region" description="Helical" evidence="1">
    <location>
        <begin position="78"/>
        <end position="98"/>
    </location>
</feature>
<feature type="transmembrane region" description="Helical" evidence="1">
    <location>
        <begin position="115"/>
        <end position="135"/>
    </location>
</feature>
<feature type="transmembrane region" description="Helical" evidence="1">
    <location>
        <begin position="148"/>
        <end position="168"/>
    </location>
</feature>
<feature type="transmembrane region" description="Helical" evidence="1">
    <location>
        <begin position="175"/>
        <end position="195"/>
    </location>
</feature>
<sequence>MSTIEAEKPRTEVSPRLKLVLELGPLMVFFFANSRGDWLASRFPVLAELGGPIFIATGLFMAATATALIVSWIMTRTLPMMPLISGIVVFVFGALTLWLQNDTFIKMKPTIVNTLFGAILLGGLLFGKSLLGYVFHAAFKLDEDGWRKLTIRWGVFFLFLAVLNEIVWRSFSTDFWVAFKVWGTMPITILFTLAQMPLIMKHSQERESAE</sequence>
<keyword id="KW-0997">Cell inner membrane</keyword>
<keyword id="KW-1003">Cell membrane</keyword>
<keyword id="KW-0472">Membrane</keyword>
<keyword id="KW-1185">Reference proteome</keyword>
<keyword id="KW-0812">Transmembrane</keyword>
<keyword id="KW-1133">Transmembrane helix</keyword>
<comment type="function">
    <text evidence="1">Plays a role in cell envelope biogenesis, maintenance of cell envelope integrity and membrane homeostasis.</text>
</comment>
<comment type="subcellular location">
    <subcellularLocation>
        <location evidence="1">Cell inner membrane</location>
        <topology evidence="1">Multi-pass membrane protein</topology>
    </subcellularLocation>
</comment>
<comment type="similarity">
    <text evidence="1">Belongs to the YciB family.</text>
</comment>
<proteinExistence type="inferred from homology"/>
<gene>
    <name evidence="1" type="primary">yciB</name>
    <name type="ordered locus">NGR_c32310</name>
</gene>
<reference key="1">
    <citation type="journal article" date="2009" name="Appl. Environ. Microbiol.">
        <title>Rhizobium sp. strain NGR234 possesses a remarkable number of secretion systems.</title>
        <authorList>
            <person name="Schmeisser C."/>
            <person name="Liesegang H."/>
            <person name="Krysciak D."/>
            <person name="Bakkou N."/>
            <person name="Le Quere A."/>
            <person name="Wollherr A."/>
            <person name="Heinemeyer I."/>
            <person name="Morgenstern B."/>
            <person name="Pommerening-Roeser A."/>
            <person name="Flores M."/>
            <person name="Palacios R."/>
            <person name="Brenner S."/>
            <person name="Gottschalk G."/>
            <person name="Schmitz R.A."/>
            <person name="Broughton W.J."/>
            <person name="Perret X."/>
            <person name="Strittmatter A.W."/>
            <person name="Streit W.R."/>
        </authorList>
    </citation>
    <scope>NUCLEOTIDE SEQUENCE [LARGE SCALE GENOMIC DNA]</scope>
    <source>
        <strain>NBRC 101917 / NGR234</strain>
    </source>
</reference>
<accession>C3MAH1</accession>
<protein>
    <recommendedName>
        <fullName evidence="1">Inner membrane-spanning protein YciB</fullName>
    </recommendedName>
</protein>
<dbReference type="EMBL" id="CP001389">
    <property type="protein sequence ID" value="ACP26964.1"/>
    <property type="molecule type" value="Genomic_DNA"/>
</dbReference>
<dbReference type="RefSeq" id="WP_012709712.1">
    <property type="nucleotide sequence ID" value="NC_012587.1"/>
</dbReference>
<dbReference type="RefSeq" id="YP_002827717.1">
    <property type="nucleotide sequence ID" value="NC_012587.1"/>
</dbReference>
<dbReference type="STRING" id="394.NGR_c32310"/>
<dbReference type="KEGG" id="rhi:NGR_c32310"/>
<dbReference type="PATRIC" id="fig|394.7.peg.6072"/>
<dbReference type="eggNOG" id="COG2917">
    <property type="taxonomic scope" value="Bacteria"/>
</dbReference>
<dbReference type="HOGENOM" id="CLU_089554_1_1_5"/>
<dbReference type="OrthoDB" id="9788219at2"/>
<dbReference type="Proteomes" id="UP000001054">
    <property type="component" value="Chromosome"/>
</dbReference>
<dbReference type="GO" id="GO:0005886">
    <property type="term" value="C:plasma membrane"/>
    <property type="evidence" value="ECO:0007669"/>
    <property type="project" value="UniProtKB-SubCell"/>
</dbReference>
<dbReference type="HAMAP" id="MF_00189">
    <property type="entry name" value="YciB"/>
    <property type="match status" value="1"/>
</dbReference>
<dbReference type="InterPro" id="IPR006008">
    <property type="entry name" value="YciB"/>
</dbReference>
<dbReference type="NCBIfam" id="TIGR00997">
    <property type="entry name" value="ispZ"/>
    <property type="match status" value="1"/>
</dbReference>
<dbReference type="NCBIfam" id="NF001323">
    <property type="entry name" value="PRK00259.1-1"/>
    <property type="match status" value="1"/>
</dbReference>
<dbReference type="PANTHER" id="PTHR36917:SF1">
    <property type="entry name" value="INNER MEMBRANE-SPANNING PROTEIN YCIB"/>
    <property type="match status" value="1"/>
</dbReference>
<dbReference type="PANTHER" id="PTHR36917">
    <property type="entry name" value="INTRACELLULAR SEPTATION PROTEIN A-RELATED"/>
    <property type="match status" value="1"/>
</dbReference>
<dbReference type="Pfam" id="PF04279">
    <property type="entry name" value="IspA"/>
    <property type="match status" value="1"/>
</dbReference>
<name>YCIB_SINFN</name>